<dbReference type="EMBL" id="AL355860">
    <property type="status" value="NOT_ANNOTATED_CDS"/>
    <property type="molecule type" value="Genomic_DNA"/>
</dbReference>
<dbReference type="CCDS" id="CCDS91049.1"/>
<dbReference type="RefSeq" id="NP_001371118.1">
    <property type="nucleotide sequence ID" value="NM_001384189.2"/>
</dbReference>
<dbReference type="SMR" id="A0A1B0GV90"/>
<dbReference type="BioMuta" id="ENSG00000283324"/>
<dbReference type="Ensembl" id="ENST00000636087.1">
    <property type="protein sequence ID" value="ENSP00000490418.1"/>
    <property type="gene ID" value="ENSG00000283324.1"/>
</dbReference>
<dbReference type="GeneID" id="100996521"/>
<dbReference type="MANE-Select" id="ENST00000636087.1">
    <property type="protein sequence ID" value="ENSP00000490418.1"/>
    <property type="RefSeq nucleotide sequence ID" value="NM_001384189.2"/>
    <property type="RefSeq protein sequence ID" value="NP_001371118.1"/>
</dbReference>
<dbReference type="AGR" id="HGNC:53440"/>
<dbReference type="GeneCards" id="CTXND2"/>
<dbReference type="HGNC" id="HGNC:53440">
    <property type="gene designation" value="CTXND2"/>
</dbReference>
<dbReference type="HPA" id="ENSG00000283324">
    <property type="expression patterns" value="Not detected"/>
</dbReference>
<dbReference type="neXtProt" id="NX_A0A1B0GV90"/>
<dbReference type="OpenTargets" id="ENSG00000283324"/>
<dbReference type="VEuPathDB" id="HostDB:ENSG00000283324"/>
<dbReference type="GeneTree" id="ENSGT00940000164740"/>
<dbReference type="InParanoid" id="A0A1B0GV90"/>
<dbReference type="OMA" id="TSTWQEE"/>
<dbReference type="PAN-GO" id="A0A1B0GV90">
    <property type="GO annotations" value="0 GO annotations based on evolutionary models"/>
</dbReference>
<dbReference type="Pharos" id="A0A1B0GV90">
    <property type="development level" value="Tdark"/>
</dbReference>
<dbReference type="PRO" id="PR:A0A1B0GV90"/>
<dbReference type="Proteomes" id="UP000005640">
    <property type="component" value="Chromosome 1"/>
</dbReference>
<dbReference type="RNAct" id="A0A1B0GV90">
    <property type="molecule type" value="protein"/>
</dbReference>
<dbReference type="Bgee" id="ENSG00000283324">
    <property type="expression patterns" value="Expressed in male germ line stem cell (sensu Vertebrata) in testis and 6 other cell types or tissues"/>
</dbReference>
<dbReference type="GO" id="GO:0016020">
    <property type="term" value="C:membrane"/>
    <property type="evidence" value="ECO:0007669"/>
    <property type="project" value="UniProtKB-SubCell"/>
</dbReference>
<dbReference type="InterPro" id="IPR020066">
    <property type="entry name" value="Cortexin"/>
</dbReference>
<dbReference type="PANTHER" id="PTHR16736:SF6">
    <property type="entry name" value="CORTEXIN DOMAIN CONTAINING 2"/>
    <property type="match status" value="1"/>
</dbReference>
<dbReference type="PANTHER" id="PTHR16736">
    <property type="entry name" value="CORTEXIN-1-RELATED"/>
    <property type="match status" value="1"/>
</dbReference>
<dbReference type="Pfam" id="PF11057">
    <property type="entry name" value="Cortexin"/>
    <property type="match status" value="1"/>
</dbReference>
<evidence type="ECO:0000255" key="1"/>
<evidence type="ECO:0000305" key="2"/>
<evidence type="ECO:0000312" key="3">
    <source>
        <dbReference type="HGNC" id="HGNC:53440"/>
    </source>
</evidence>
<reference key="1">
    <citation type="journal article" date="2006" name="Nature">
        <title>The DNA sequence and biological annotation of human chromosome 1.</title>
        <authorList>
            <person name="Gregory S.G."/>
            <person name="Barlow K.F."/>
            <person name="McLay K.E."/>
            <person name="Kaul R."/>
            <person name="Swarbreck D."/>
            <person name="Dunham A."/>
            <person name="Scott C.E."/>
            <person name="Howe K.L."/>
            <person name="Woodfine K."/>
            <person name="Spencer C.C.A."/>
            <person name="Jones M.C."/>
            <person name="Gillson C."/>
            <person name="Searle S."/>
            <person name="Zhou Y."/>
            <person name="Kokocinski F."/>
            <person name="McDonald L."/>
            <person name="Evans R."/>
            <person name="Phillips K."/>
            <person name="Atkinson A."/>
            <person name="Cooper R."/>
            <person name="Jones C."/>
            <person name="Hall R.E."/>
            <person name="Andrews T.D."/>
            <person name="Lloyd C."/>
            <person name="Ainscough R."/>
            <person name="Almeida J.P."/>
            <person name="Ambrose K.D."/>
            <person name="Anderson F."/>
            <person name="Andrew R.W."/>
            <person name="Ashwell R.I.S."/>
            <person name="Aubin K."/>
            <person name="Babbage A.K."/>
            <person name="Bagguley C.L."/>
            <person name="Bailey J."/>
            <person name="Beasley H."/>
            <person name="Bethel G."/>
            <person name="Bird C.P."/>
            <person name="Bray-Allen S."/>
            <person name="Brown J.Y."/>
            <person name="Brown A.J."/>
            <person name="Buckley D."/>
            <person name="Burton J."/>
            <person name="Bye J."/>
            <person name="Carder C."/>
            <person name="Chapman J.C."/>
            <person name="Clark S.Y."/>
            <person name="Clarke G."/>
            <person name="Clee C."/>
            <person name="Cobley V."/>
            <person name="Collier R.E."/>
            <person name="Corby N."/>
            <person name="Coville G.J."/>
            <person name="Davies J."/>
            <person name="Deadman R."/>
            <person name="Dunn M."/>
            <person name="Earthrowl M."/>
            <person name="Ellington A.G."/>
            <person name="Errington H."/>
            <person name="Frankish A."/>
            <person name="Frankland J."/>
            <person name="French L."/>
            <person name="Garner P."/>
            <person name="Garnett J."/>
            <person name="Gay L."/>
            <person name="Ghori M.R.J."/>
            <person name="Gibson R."/>
            <person name="Gilby L.M."/>
            <person name="Gillett W."/>
            <person name="Glithero R.J."/>
            <person name="Grafham D.V."/>
            <person name="Griffiths C."/>
            <person name="Griffiths-Jones S."/>
            <person name="Grocock R."/>
            <person name="Hammond S."/>
            <person name="Harrison E.S.I."/>
            <person name="Hart E."/>
            <person name="Haugen E."/>
            <person name="Heath P.D."/>
            <person name="Holmes S."/>
            <person name="Holt K."/>
            <person name="Howden P.J."/>
            <person name="Hunt A.R."/>
            <person name="Hunt S.E."/>
            <person name="Hunter G."/>
            <person name="Isherwood J."/>
            <person name="James R."/>
            <person name="Johnson C."/>
            <person name="Johnson D."/>
            <person name="Joy A."/>
            <person name="Kay M."/>
            <person name="Kershaw J.K."/>
            <person name="Kibukawa M."/>
            <person name="Kimberley A.M."/>
            <person name="King A."/>
            <person name="Knights A.J."/>
            <person name="Lad H."/>
            <person name="Laird G."/>
            <person name="Lawlor S."/>
            <person name="Leongamornlert D.A."/>
            <person name="Lloyd D.M."/>
            <person name="Loveland J."/>
            <person name="Lovell J."/>
            <person name="Lush M.J."/>
            <person name="Lyne R."/>
            <person name="Martin S."/>
            <person name="Mashreghi-Mohammadi M."/>
            <person name="Matthews L."/>
            <person name="Matthews N.S.W."/>
            <person name="McLaren S."/>
            <person name="Milne S."/>
            <person name="Mistry S."/>
            <person name="Moore M.J.F."/>
            <person name="Nickerson T."/>
            <person name="O'Dell C.N."/>
            <person name="Oliver K."/>
            <person name="Palmeiri A."/>
            <person name="Palmer S.A."/>
            <person name="Parker A."/>
            <person name="Patel D."/>
            <person name="Pearce A.V."/>
            <person name="Peck A.I."/>
            <person name="Pelan S."/>
            <person name="Phelps K."/>
            <person name="Phillimore B.J."/>
            <person name="Plumb R."/>
            <person name="Rajan J."/>
            <person name="Raymond C."/>
            <person name="Rouse G."/>
            <person name="Saenphimmachak C."/>
            <person name="Sehra H.K."/>
            <person name="Sheridan E."/>
            <person name="Shownkeen R."/>
            <person name="Sims S."/>
            <person name="Skuce C.D."/>
            <person name="Smith M."/>
            <person name="Steward C."/>
            <person name="Subramanian S."/>
            <person name="Sycamore N."/>
            <person name="Tracey A."/>
            <person name="Tromans A."/>
            <person name="Van Helmond Z."/>
            <person name="Wall M."/>
            <person name="Wallis J.M."/>
            <person name="White S."/>
            <person name="Whitehead S.L."/>
            <person name="Wilkinson J.E."/>
            <person name="Willey D.L."/>
            <person name="Williams H."/>
            <person name="Wilming L."/>
            <person name="Wray P.W."/>
            <person name="Wu Z."/>
            <person name="Coulson A."/>
            <person name="Vaudin M."/>
            <person name="Sulston J.E."/>
            <person name="Durbin R.M."/>
            <person name="Hubbard T."/>
            <person name="Wooster R."/>
            <person name="Dunham I."/>
            <person name="Carter N.P."/>
            <person name="McVean G."/>
            <person name="Ross M.T."/>
            <person name="Harrow J."/>
            <person name="Olson M.V."/>
            <person name="Beck S."/>
            <person name="Rogers J."/>
            <person name="Bentley D.R."/>
        </authorList>
    </citation>
    <scope>NUCLEOTIDE SEQUENCE [LARGE SCALE GENOMIC DNA]</scope>
</reference>
<protein>
    <recommendedName>
        <fullName evidence="2">Cortexin domain containing 2</fullName>
    </recommendedName>
</protein>
<organism>
    <name type="scientific">Homo sapiens</name>
    <name type="common">Human</name>
    <dbReference type="NCBI Taxonomy" id="9606"/>
    <lineage>
        <taxon>Eukaryota</taxon>
        <taxon>Metazoa</taxon>
        <taxon>Chordata</taxon>
        <taxon>Craniata</taxon>
        <taxon>Vertebrata</taxon>
        <taxon>Euteleostomi</taxon>
        <taxon>Mammalia</taxon>
        <taxon>Eutheria</taxon>
        <taxon>Euarchontoglires</taxon>
        <taxon>Primates</taxon>
        <taxon>Haplorrhini</taxon>
        <taxon>Catarrhini</taxon>
        <taxon>Hominidae</taxon>
        <taxon>Homo</taxon>
    </lineage>
</organism>
<sequence>MEDSSLSSGVDVDKGFAIAFVVLLFLFLIVMIFRCAKLVKNPYKASSTTTEPSLS</sequence>
<proteinExistence type="inferred from homology"/>
<accession>A0A1B0GV90</accession>
<keyword id="KW-0472">Membrane</keyword>
<keyword id="KW-1185">Reference proteome</keyword>
<keyword id="KW-0812">Transmembrane</keyword>
<keyword id="KW-1133">Transmembrane helix</keyword>
<gene>
    <name evidence="3" type="primary">CTXND2</name>
</gene>
<feature type="chain" id="PRO_0000442854" description="Cortexin domain containing 2">
    <location>
        <begin position="1"/>
        <end position="55"/>
    </location>
</feature>
<feature type="transmembrane region" description="Helical" evidence="1">
    <location>
        <begin position="16"/>
        <end position="36"/>
    </location>
</feature>
<comment type="subcellular location">
    <subcellularLocation>
        <location evidence="1">Membrane</location>
        <topology evidence="1">Single-pass membrane protein</topology>
    </subcellularLocation>
</comment>
<name>CTXD2_HUMAN</name>